<dbReference type="EMBL" id="AF095689">
    <property type="protein sequence ID" value="AAF33939.1"/>
    <property type="molecule type" value="Genomic_DNA"/>
</dbReference>
<dbReference type="SMR" id="Q77TL4"/>
<dbReference type="Proteomes" id="UP000163220">
    <property type="component" value="Genome"/>
</dbReference>
<dbReference type="GO" id="GO:0016020">
    <property type="term" value="C:membrane"/>
    <property type="evidence" value="ECO:0007669"/>
    <property type="project" value="UniProtKB-KW"/>
</dbReference>
<dbReference type="GO" id="GO:0019031">
    <property type="term" value="C:viral envelope"/>
    <property type="evidence" value="ECO:0007669"/>
    <property type="project" value="UniProtKB-KW"/>
</dbReference>
<dbReference type="GO" id="GO:0055036">
    <property type="term" value="C:virion membrane"/>
    <property type="evidence" value="ECO:0007669"/>
    <property type="project" value="UniProtKB-SubCell"/>
</dbReference>
<dbReference type="GO" id="GO:0019064">
    <property type="term" value="P:fusion of virus membrane with host plasma membrane"/>
    <property type="evidence" value="ECO:0007669"/>
    <property type="project" value="UniProtKB-KW"/>
</dbReference>
<dbReference type="GO" id="GO:0046718">
    <property type="term" value="P:symbiont entry into host cell"/>
    <property type="evidence" value="ECO:0007669"/>
    <property type="project" value="UniProtKB-KW"/>
</dbReference>
<dbReference type="InterPro" id="IPR010367">
    <property type="entry name" value="Poxvirus_G3"/>
</dbReference>
<dbReference type="Pfam" id="PF06129">
    <property type="entry name" value="Chordopox_G3"/>
    <property type="match status" value="1"/>
</dbReference>
<comment type="function">
    <text evidence="1">Component of the entry fusion complex (EFC), which consists of 11 proteins. During cell infection, this complex mediates entry of the virion core into the host cytoplasm by a two-step mechanism consisting of lipid mixing of the viral and cellular membranes and subsequent pore formation.</text>
</comment>
<comment type="subunit">
    <text evidence="1">Interacts with OPG099/L5. Component of the entry fusion complex (EFC) composed of OPG053, OPG076, OPG086, OPG094, OPG095, OPG099, OPG107, OPG143, OPG104, OPG147 and OPG155. Except for OPG095 and OPG053, each of the EFC proteins is required for assembly or stability of the complex.</text>
</comment>
<comment type="subcellular location">
    <subcellularLocation>
        <location evidence="1">Virion membrane</location>
        <topology evidence="1">Single-pass membrane protein</topology>
    </subcellularLocation>
    <text evidence="1">Component of the mature virion (MV) membrane.</text>
</comment>
<comment type="induction">
    <text evidence="1">Expressed in the late phase of the viral replicative cycle.</text>
</comment>
<comment type="PTM">
    <text evidence="1">Unglycosylated because produced in viral factories instead of the classic ER -Golgi route.</text>
</comment>
<comment type="similarity">
    <text evidence="3">Belongs to the orthopoxvirus OPG086 family.</text>
</comment>
<name>PG086_VACCT</name>
<organismHost>
    <name type="scientific">Homo sapiens</name>
    <name type="common">Human</name>
    <dbReference type="NCBI Taxonomy" id="9606"/>
</organismHost>
<evidence type="ECO:0000250" key="1">
    <source>
        <dbReference type="UniProtKB" id="P68458"/>
    </source>
</evidence>
<evidence type="ECO:0000255" key="2"/>
<evidence type="ECO:0000305" key="3"/>
<feature type="chain" id="PRO_0000262927" description="Entry-fusion complex protein OPG086">
    <location>
        <begin position="1"/>
        <end position="111"/>
    </location>
</feature>
<feature type="transmembrane region" description="Helical; Signal-anchor" evidence="2">
    <location>
        <begin position="1"/>
        <end position="21"/>
    </location>
</feature>
<feature type="topological domain" description="Virion surface" evidence="2">
    <location>
        <begin position="22"/>
        <end position="111"/>
    </location>
</feature>
<accession>Q77TL4</accession>
<sequence>MASLLYLILFLLFVCISYYFTYYPTNKLQAAVMETDRENAIIRQRNDEIPTRTLDTAIFTDASTVASAQIHLYYNSNIGKIIMSLNGKKHTFNLYDDNDIRTLLPILLLSK</sequence>
<keyword id="KW-1169">Fusion of virus membrane with host cell membrane</keyword>
<keyword id="KW-1168">Fusion of virus membrane with host membrane</keyword>
<keyword id="KW-0426">Late protein</keyword>
<keyword id="KW-0472">Membrane</keyword>
<keyword id="KW-0735">Signal-anchor</keyword>
<keyword id="KW-0812">Transmembrane</keyword>
<keyword id="KW-1133">Transmembrane helix</keyword>
<keyword id="KW-0261">Viral envelope protein</keyword>
<keyword id="KW-1162">Viral penetration into host cytoplasm</keyword>
<keyword id="KW-0946">Virion</keyword>
<keyword id="KW-1160">Virus entry into host cell</keyword>
<gene>
    <name type="primary">OPG086</name>
    <name type="ORF">TG3L</name>
</gene>
<proteinExistence type="inferred from homology"/>
<reference key="1">
    <citation type="submission" date="1998-09" db="EMBL/GenBank/DDBJ databases">
        <title>Complete genomic sequence of vaccinia virus (Tian Tan strain).</title>
        <authorList>
            <person name="Jin Q."/>
            <person name="Hou Y.D."/>
            <person name="Cheng N.H."/>
            <person name="Yao E.M."/>
            <person name="Cheng S.X."/>
            <person name="Yang X.K."/>
            <person name="Jing D.Y."/>
            <person name="Yu W.H."/>
            <person name="Yuan J.S."/>
            <person name="Ma X.J."/>
        </authorList>
    </citation>
    <scope>NUCLEOTIDE SEQUENCE [LARGE SCALE GENOMIC DNA]</scope>
</reference>
<protein>
    <recommendedName>
        <fullName>Entry-fusion complex protein OPG086</fullName>
        <shortName>EFC protein OPG086</shortName>
    </recommendedName>
    <alternativeName>
        <fullName>Protein G3</fullName>
    </alternativeName>
</protein>
<organism>
    <name type="scientific">Vaccinia virus (strain Tian Tan)</name>
    <name type="common">VACV</name>
    <dbReference type="NCBI Taxonomy" id="10253"/>
    <lineage>
        <taxon>Viruses</taxon>
        <taxon>Varidnaviria</taxon>
        <taxon>Bamfordvirae</taxon>
        <taxon>Nucleocytoviricota</taxon>
        <taxon>Pokkesviricetes</taxon>
        <taxon>Chitovirales</taxon>
        <taxon>Poxviridae</taxon>
        <taxon>Chordopoxvirinae</taxon>
        <taxon>Orthopoxvirus</taxon>
        <taxon>Vaccinia virus</taxon>
    </lineage>
</organism>